<comment type="function">
    <text evidence="1">Catalyzes a reversible aldol reaction between acetaldehyde and D-glyceraldehyde 3-phosphate to generate 2-deoxy-D-ribose 5-phosphate.</text>
</comment>
<comment type="catalytic activity">
    <reaction>
        <text>2-deoxy-D-ribose 5-phosphate = D-glyceraldehyde 3-phosphate + acetaldehyde</text>
        <dbReference type="Rhea" id="RHEA:12821"/>
        <dbReference type="ChEBI" id="CHEBI:15343"/>
        <dbReference type="ChEBI" id="CHEBI:59776"/>
        <dbReference type="ChEBI" id="CHEBI:62877"/>
        <dbReference type="EC" id="4.1.2.4"/>
    </reaction>
</comment>
<comment type="pathway">
    <text>Carbohydrate degradation; 2-deoxy-D-ribose 1-phosphate degradation; D-glyceraldehyde 3-phosphate and acetaldehyde from 2-deoxy-alpha-D-ribose 1-phosphate: step 2/2.</text>
</comment>
<comment type="subcellular location">
    <subcellularLocation>
        <location evidence="1">Cytoplasm</location>
    </subcellularLocation>
</comment>
<comment type="similarity">
    <text evidence="3">Belongs to the DeoC/FbaB aldolase family. DeoC type 1 subfamily.</text>
</comment>
<accession>P0CH94</accession>
<accession>J3KH18</accession>
<accession>J3KH34</accession>
<evidence type="ECO:0000250" key="1"/>
<evidence type="ECO:0000250" key="2">
    <source>
        <dbReference type="UniProtKB" id="P0A6L0"/>
    </source>
</evidence>
<evidence type="ECO:0000305" key="3"/>
<reference key="1">
    <citation type="journal article" date="2009" name="Genome Res.">
        <title>Comparative genomic analyses of the human fungal pathogens Coccidioides and their relatives.</title>
        <authorList>
            <person name="Sharpton T.J."/>
            <person name="Stajich J.E."/>
            <person name="Rounsley S.D."/>
            <person name="Gardner M.J."/>
            <person name="Wortman J.R."/>
            <person name="Jordar V.S."/>
            <person name="Maiti R."/>
            <person name="Kodira C.D."/>
            <person name="Neafsey D.E."/>
            <person name="Zeng Q."/>
            <person name="Hung C.-Y."/>
            <person name="McMahan C."/>
            <person name="Muszewska A."/>
            <person name="Grynberg M."/>
            <person name="Mandel M.A."/>
            <person name="Kellner E.M."/>
            <person name="Barker B.M."/>
            <person name="Galgiani J.N."/>
            <person name="Orbach M.J."/>
            <person name="Kirkland T.N."/>
            <person name="Cole G.T."/>
            <person name="Henn M.R."/>
            <person name="Birren B.W."/>
            <person name="Taylor J.W."/>
        </authorList>
    </citation>
    <scope>NUCLEOTIDE SEQUENCE [LARGE SCALE GENOMIC DNA]</scope>
    <source>
        <strain>RS</strain>
    </source>
</reference>
<reference key="2">
    <citation type="journal article" date="2010" name="Genome Res.">
        <title>Population genomic sequencing of Coccidioides fungi reveals recent hybridization and transposon control.</title>
        <authorList>
            <person name="Neafsey D.E."/>
            <person name="Barker B.M."/>
            <person name="Sharpton T.J."/>
            <person name="Stajich J.E."/>
            <person name="Park D.J."/>
            <person name="Whiston E."/>
            <person name="Hung C.-Y."/>
            <person name="McMahan C."/>
            <person name="White J."/>
            <person name="Sykes S."/>
            <person name="Heiman D."/>
            <person name="Young S."/>
            <person name="Zeng Q."/>
            <person name="Abouelleil A."/>
            <person name="Aftuck L."/>
            <person name="Bessette D."/>
            <person name="Brown A."/>
            <person name="FitzGerald M."/>
            <person name="Lui A."/>
            <person name="Macdonald J.P."/>
            <person name="Priest M."/>
            <person name="Orbach M.J."/>
            <person name="Galgiani J.N."/>
            <person name="Kirkland T.N."/>
            <person name="Cole G.T."/>
            <person name="Birren B.W."/>
            <person name="Henn M.R."/>
            <person name="Taylor J.W."/>
            <person name="Rounsley S.D."/>
        </authorList>
    </citation>
    <scope>GENOME REANNOTATION</scope>
    <source>
        <strain>RS</strain>
    </source>
</reference>
<feature type="chain" id="PRO_0000398843" description="Deoxyribose-phosphate aldolase">
    <location>
        <begin position="1"/>
        <end position="267"/>
    </location>
</feature>
<feature type="active site" description="Proton donor/acceptor" evidence="2">
    <location>
        <position position="123"/>
    </location>
</feature>
<feature type="active site" description="Schiff-base intermediate with acetaldehyde" evidence="2">
    <location>
        <position position="185"/>
    </location>
</feature>
<feature type="active site" description="Proton donor/acceptor" evidence="2">
    <location>
        <position position="217"/>
    </location>
</feature>
<organism>
    <name type="scientific">Coccidioides immitis (strain RS)</name>
    <name type="common">Valley fever fungus</name>
    <dbReference type="NCBI Taxonomy" id="246410"/>
    <lineage>
        <taxon>Eukaryota</taxon>
        <taxon>Fungi</taxon>
        <taxon>Dikarya</taxon>
        <taxon>Ascomycota</taxon>
        <taxon>Pezizomycotina</taxon>
        <taxon>Eurotiomycetes</taxon>
        <taxon>Eurotiomycetidae</taxon>
        <taxon>Onygenales</taxon>
        <taxon>Onygenaceae</taxon>
        <taxon>Coccidioides</taxon>
    </lineage>
</organism>
<name>DEOC_COCIM</name>
<protein>
    <recommendedName>
        <fullName>Deoxyribose-phosphate aldolase</fullName>
        <shortName>DERA</shortName>
        <ecNumber>4.1.2.4</ecNumber>
    </recommendedName>
    <alternativeName>
        <fullName>2-deoxy-D-ribose 5-phosphate aldolase</fullName>
    </alternativeName>
    <alternativeName>
        <fullName>Phosphodeoxyriboaldolase</fullName>
        <shortName>Deoxyriboaldolase</shortName>
    </alternativeName>
</protein>
<gene>
    <name type="ORF">CIMG_00461</name>
</gene>
<sequence>MSSLNNEEWDLLISGKKATLQYPIPLLCYPAPEVVSIAQIIDHTQLSLSATGSQIDVLCAEAKEYGFATVCVRPDYVSRAVQYLQGTQVGVTCVIGFHEGTYSTDQKVSEAKRAMQNGASELDMVMNYPWLSEKRYTDVFQDIRAVRLAAKDAILKVILETSQLTADEIIAGCVLSSLAGADYVKTSTGFNGPGASIENVSLMSAVCDSLQSETRVKASGGIRTIEDCVKMVRAGAERLGASAGVKIVNETRLGNRQVDEPMEPTNY</sequence>
<dbReference type="EC" id="4.1.2.4"/>
<dbReference type="EMBL" id="GG704911">
    <property type="protein sequence ID" value="EAS35107.3"/>
    <property type="molecule type" value="Genomic_DNA"/>
</dbReference>
<dbReference type="RefSeq" id="XP_001246690.1">
    <property type="nucleotide sequence ID" value="XM_001246689.2"/>
</dbReference>
<dbReference type="SMR" id="P0CH94"/>
<dbReference type="STRING" id="246410.P0CH94"/>
<dbReference type="GeneID" id="4566357"/>
<dbReference type="KEGG" id="cim:CIMG_00461"/>
<dbReference type="VEuPathDB" id="FungiDB:CIMG_00461"/>
<dbReference type="InParanoid" id="P0CH94"/>
<dbReference type="OMA" id="MNACIPP"/>
<dbReference type="OrthoDB" id="70823at2759"/>
<dbReference type="UniPathway" id="UPA00002">
    <property type="reaction ID" value="UER00468"/>
</dbReference>
<dbReference type="Proteomes" id="UP000001261">
    <property type="component" value="Unassembled WGS sequence"/>
</dbReference>
<dbReference type="GO" id="GO:0005737">
    <property type="term" value="C:cytoplasm"/>
    <property type="evidence" value="ECO:0007669"/>
    <property type="project" value="UniProtKB-SubCell"/>
</dbReference>
<dbReference type="GO" id="GO:0004139">
    <property type="term" value="F:deoxyribose-phosphate aldolase activity"/>
    <property type="evidence" value="ECO:0007669"/>
    <property type="project" value="UniProtKB-EC"/>
</dbReference>
<dbReference type="GO" id="GO:0016052">
    <property type="term" value="P:carbohydrate catabolic process"/>
    <property type="evidence" value="ECO:0007669"/>
    <property type="project" value="TreeGrafter"/>
</dbReference>
<dbReference type="GO" id="GO:0009264">
    <property type="term" value="P:deoxyribonucleotide catabolic process"/>
    <property type="evidence" value="ECO:0007669"/>
    <property type="project" value="InterPro"/>
</dbReference>
<dbReference type="GO" id="GO:0046386">
    <property type="term" value="P:deoxyribose phosphate catabolic process"/>
    <property type="evidence" value="ECO:0007669"/>
    <property type="project" value="UniProtKB-UniPathway"/>
</dbReference>
<dbReference type="CDD" id="cd00959">
    <property type="entry name" value="DeoC"/>
    <property type="match status" value="1"/>
</dbReference>
<dbReference type="FunFam" id="3.20.20.70:FF:000198">
    <property type="entry name" value="Deoxyribose-phosphate aldolase"/>
    <property type="match status" value="1"/>
</dbReference>
<dbReference type="Gene3D" id="3.20.20.70">
    <property type="entry name" value="Aldolase class I"/>
    <property type="match status" value="1"/>
</dbReference>
<dbReference type="HAMAP" id="MF_00114">
    <property type="entry name" value="DeoC_type1"/>
    <property type="match status" value="1"/>
</dbReference>
<dbReference type="InterPro" id="IPR013785">
    <property type="entry name" value="Aldolase_TIM"/>
</dbReference>
<dbReference type="InterPro" id="IPR011343">
    <property type="entry name" value="DeoC"/>
</dbReference>
<dbReference type="InterPro" id="IPR002915">
    <property type="entry name" value="DeoC/FbaB/LacD_aldolase"/>
</dbReference>
<dbReference type="InterPro" id="IPR028581">
    <property type="entry name" value="DeoC_typeI"/>
</dbReference>
<dbReference type="NCBIfam" id="TIGR00126">
    <property type="entry name" value="deoC"/>
    <property type="match status" value="1"/>
</dbReference>
<dbReference type="PANTHER" id="PTHR10889">
    <property type="entry name" value="DEOXYRIBOSE-PHOSPHATE ALDOLASE"/>
    <property type="match status" value="1"/>
</dbReference>
<dbReference type="PANTHER" id="PTHR10889:SF1">
    <property type="entry name" value="DEOXYRIBOSE-PHOSPHATE ALDOLASE"/>
    <property type="match status" value="1"/>
</dbReference>
<dbReference type="Pfam" id="PF01791">
    <property type="entry name" value="DeoC"/>
    <property type="match status" value="1"/>
</dbReference>
<dbReference type="PIRSF" id="PIRSF001357">
    <property type="entry name" value="DeoC"/>
    <property type="match status" value="1"/>
</dbReference>
<dbReference type="SMART" id="SM01133">
    <property type="entry name" value="DeoC"/>
    <property type="match status" value="1"/>
</dbReference>
<dbReference type="SUPFAM" id="SSF51569">
    <property type="entry name" value="Aldolase"/>
    <property type="match status" value="1"/>
</dbReference>
<proteinExistence type="inferred from homology"/>
<keyword id="KW-0963">Cytoplasm</keyword>
<keyword id="KW-0456">Lyase</keyword>
<keyword id="KW-1185">Reference proteome</keyword>
<keyword id="KW-0704">Schiff base</keyword>